<feature type="chain" id="PRO_1000092687" description="Imidazoleglycerol-phosphate dehydratase">
    <location>
        <begin position="1"/>
        <end position="195"/>
    </location>
</feature>
<reference key="1">
    <citation type="journal article" date="2008" name="Genome Res.">
        <title>Genome sequence of the beta-rhizobium Cupriavidus taiwanensis and comparative genomics of rhizobia.</title>
        <authorList>
            <person name="Amadou C."/>
            <person name="Pascal G."/>
            <person name="Mangenot S."/>
            <person name="Glew M."/>
            <person name="Bontemps C."/>
            <person name="Capela D."/>
            <person name="Carrere S."/>
            <person name="Cruveiller S."/>
            <person name="Dossat C."/>
            <person name="Lajus A."/>
            <person name="Marchetti M."/>
            <person name="Poinsot V."/>
            <person name="Rouy Z."/>
            <person name="Servin B."/>
            <person name="Saad M."/>
            <person name="Schenowitz C."/>
            <person name="Barbe V."/>
            <person name="Batut J."/>
            <person name="Medigue C."/>
            <person name="Masson-Boivin C."/>
        </authorList>
    </citation>
    <scope>NUCLEOTIDE SEQUENCE [LARGE SCALE GENOMIC DNA]</scope>
    <source>
        <strain>DSM 17343 / BCRC 17206 / CCUG 44338 / CIP 107171 / LMG 19424 / R1</strain>
    </source>
</reference>
<comment type="catalytic activity">
    <reaction evidence="1">
        <text>D-erythro-1-(imidazol-4-yl)glycerol 3-phosphate = 3-(imidazol-4-yl)-2-oxopropyl phosphate + H2O</text>
        <dbReference type="Rhea" id="RHEA:11040"/>
        <dbReference type="ChEBI" id="CHEBI:15377"/>
        <dbReference type="ChEBI" id="CHEBI:57766"/>
        <dbReference type="ChEBI" id="CHEBI:58278"/>
        <dbReference type="EC" id="4.2.1.19"/>
    </reaction>
</comment>
<comment type="pathway">
    <text evidence="1">Amino-acid biosynthesis; L-histidine biosynthesis; L-histidine from 5-phospho-alpha-D-ribose 1-diphosphate: step 6/9.</text>
</comment>
<comment type="subcellular location">
    <subcellularLocation>
        <location evidence="1">Cytoplasm</location>
    </subcellularLocation>
</comment>
<comment type="similarity">
    <text evidence="1">Belongs to the imidazoleglycerol-phosphate dehydratase family.</text>
</comment>
<proteinExistence type="inferred from homology"/>
<dbReference type="EC" id="4.2.1.19" evidence="1"/>
<dbReference type="EMBL" id="CU633749">
    <property type="protein sequence ID" value="CAQ70798.1"/>
    <property type="molecule type" value="Genomic_DNA"/>
</dbReference>
<dbReference type="RefSeq" id="WP_010812330.1">
    <property type="nucleotide sequence ID" value="NC_010528.1"/>
</dbReference>
<dbReference type="SMR" id="B3R798"/>
<dbReference type="GeneID" id="29761729"/>
<dbReference type="KEGG" id="cti:RALTA_A2873"/>
<dbReference type="eggNOG" id="COG0131">
    <property type="taxonomic scope" value="Bacteria"/>
</dbReference>
<dbReference type="HOGENOM" id="CLU_044308_2_0_4"/>
<dbReference type="BioCyc" id="CTAI977880:RALTA_RS14000-MONOMER"/>
<dbReference type="UniPathway" id="UPA00031">
    <property type="reaction ID" value="UER00011"/>
</dbReference>
<dbReference type="Proteomes" id="UP000001692">
    <property type="component" value="Chromosome 1"/>
</dbReference>
<dbReference type="GO" id="GO:0005737">
    <property type="term" value="C:cytoplasm"/>
    <property type="evidence" value="ECO:0007669"/>
    <property type="project" value="UniProtKB-SubCell"/>
</dbReference>
<dbReference type="GO" id="GO:0004424">
    <property type="term" value="F:imidazoleglycerol-phosphate dehydratase activity"/>
    <property type="evidence" value="ECO:0007669"/>
    <property type="project" value="UniProtKB-UniRule"/>
</dbReference>
<dbReference type="GO" id="GO:0000105">
    <property type="term" value="P:L-histidine biosynthetic process"/>
    <property type="evidence" value="ECO:0007669"/>
    <property type="project" value="UniProtKB-UniRule"/>
</dbReference>
<dbReference type="CDD" id="cd07914">
    <property type="entry name" value="IGPD"/>
    <property type="match status" value="1"/>
</dbReference>
<dbReference type="FunFam" id="3.30.230.40:FF:000002">
    <property type="entry name" value="Imidazoleglycerol-phosphate dehydratase"/>
    <property type="match status" value="1"/>
</dbReference>
<dbReference type="FunFam" id="3.30.230.40:FF:000003">
    <property type="entry name" value="Imidazoleglycerol-phosphate dehydratase HisB"/>
    <property type="match status" value="1"/>
</dbReference>
<dbReference type="Gene3D" id="3.30.230.40">
    <property type="entry name" value="Imidazole glycerol phosphate dehydratase, domain 1"/>
    <property type="match status" value="2"/>
</dbReference>
<dbReference type="HAMAP" id="MF_00076">
    <property type="entry name" value="HisB"/>
    <property type="match status" value="1"/>
</dbReference>
<dbReference type="InterPro" id="IPR038494">
    <property type="entry name" value="IGPD_sf"/>
</dbReference>
<dbReference type="InterPro" id="IPR000807">
    <property type="entry name" value="ImidazoleglycerolP_deHydtase"/>
</dbReference>
<dbReference type="InterPro" id="IPR020565">
    <property type="entry name" value="ImidazoleglycerP_deHydtase_CS"/>
</dbReference>
<dbReference type="InterPro" id="IPR020568">
    <property type="entry name" value="Ribosomal_Su5_D2-typ_SF"/>
</dbReference>
<dbReference type="NCBIfam" id="NF002106">
    <property type="entry name" value="PRK00951.1-1"/>
    <property type="match status" value="1"/>
</dbReference>
<dbReference type="NCBIfam" id="NF002109">
    <property type="entry name" value="PRK00951.1-5"/>
    <property type="match status" value="1"/>
</dbReference>
<dbReference type="NCBIfam" id="NF002111">
    <property type="entry name" value="PRK00951.2-1"/>
    <property type="match status" value="1"/>
</dbReference>
<dbReference type="NCBIfam" id="NF002114">
    <property type="entry name" value="PRK00951.2-4"/>
    <property type="match status" value="1"/>
</dbReference>
<dbReference type="PANTHER" id="PTHR23133:SF2">
    <property type="entry name" value="IMIDAZOLEGLYCEROL-PHOSPHATE DEHYDRATASE"/>
    <property type="match status" value="1"/>
</dbReference>
<dbReference type="PANTHER" id="PTHR23133">
    <property type="entry name" value="IMIDAZOLEGLYCEROL-PHOSPHATE DEHYDRATASE HIS7"/>
    <property type="match status" value="1"/>
</dbReference>
<dbReference type="Pfam" id="PF00475">
    <property type="entry name" value="IGPD"/>
    <property type="match status" value="1"/>
</dbReference>
<dbReference type="SUPFAM" id="SSF54211">
    <property type="entry name" value="Ribosomal protein S5 domain 2-like"/>
    <property type="match status" value="2"/>
</dbReference>
<dbReference type="PROSITE" id="PS00954">
    <property type="entry name" value="IGP_DEHYDRATASE_1"/>
    <property type="match status" value="1"/>
</dbReference>
<dbReference type="PROSITE" id="PS00955">
    <property type="entry name" value="IGP_DEHYDRATASE_2"/>
    <property type="match status" value="1"/>
</dbReference>
<name>HIS7_CUPTR</name>
<gene>
    <name evidence="1" type="primary">hisB</name>
    <name type="ordered locus">RALTA_A2873</name>
</gene>
<accession>B3R798</accession>
<sequence>MRVAEVTRNTSETQIRVSLNLDGSGRQKLASGVPFLDHMLDQIARHGMFDLEVEATGDTHIDDHHTVEDVGITLGQAVARAIGDKKGITRYGHSYVPLDECLSRVVIDFSGRPGLEFHVPFTRARVGSFDVDLTIEFFRGFVNHAGVTLHIDNLRGINAHHQCETVFKAFGRALRMAVELDPRAANTIPSTKGTL</sequence>
<protein>
    <recommendedName>
        <fullName evidence="1">Imidazoleglycerol-phosphate dehydratase</fullName>
        <shortName evidence="1">IGPD</shortName>
        <ecNumber evidence="1">4.2.1.19</ecNumber>
    </recommendedName>
</protein>
<keyword id="KW-0028">Amino-acid biosynthesis</keyword>
<keyword id="KW-0963">Cytoplasm</keyword>
<keyword id="KW-0368">Histidine biosynthesis</keyword>
<keyword id="KW-0456">Lyase</keyword>
<organism>
    <name type="scientific">Cupriavidus taiwanensis (strain DSM 17343 / BCRC 17206 / CCUG 44338 / CIP 107171 / LMG 19424 / R1)</name>
    <name type="common">Ralstonia taiwanensis (strain LMG 19424)</name>
    <dbReference type="NCBI Taxonomy" id="977880"/>
    <lineage>
        <taxon>Bacteria</taxon>
        <taxon>Pseudomonadati</taxon>
        <taxon>Pseudomonadota</taxon>
        <taxon>Betaproteobacteria</taxon>
        <taxon>Burkholderiales</taxon>
        <taxon>Burkholderiaceae</taxon>
        <taxon>Cupriavidus</taxon>
    </lineage>
</organism>
<evidence type="ECO:0000255" key="1">
    <source>
        <dbReference type="HAMAP-Rule" id="MF_00076"/>
    </source>
</evidence>